<sequence length="258" mass="28675">MADERVSARGGMETSFGFREVGTGEKQPLVNDVFHKVAKRYDIMNDVMSAGLHRVWKDAMIAALNPPGREDYRVLDVAGGTGDIAFRIVERSGRKAHATVLDINGSMLSVGAERARKKGIEANLDFVEANAEDLPFAANSFDAYTIAFGIRNVPRIEVALKEAYRVLKRGGRLLVLEFSEVEMPLLDRFYDAWSFNAIPKFGKLITGDDAPYQYLVESIRKFPNQRDFAAMIRDAGFARVSFTNYTGGIAALHSGWKI</sequence>
<gene>
    <name evidence="1" type="primary">ubiE</name>
    <name type="ordered locus">R00364</name>
    <name type="ORF">SMc01155</name>
</gene>
<comment type="function">
    <text evidence="1">Methyltransferase required for the conversion of demethylmenaquinol (DMKH2) to menaquinol (MKH2) and the conversion of 2-polyprenyl-6-methoxy-1,4-benzoquinol (DDMQH2) to 2-polyprenyl-3-methyl-6-methoxy-1,4-benzoquinol (DMQH2).</text>
</comment>
<comment type="catalytic activity">
    <reaction evidence="1">
        <text>a 2-demethylmenaquinol + S-adenosyl-L-methionine = a menaquinol + S-adenosyl-L-homocysteine + H(+)</text>
        <dbReference type="Rhea" id="RHEA:42640"/>
        <dbReference type="Rhea" id="RHEA-COMP:9539"/>
        <dbReference type="Rhea" id="RHEA-COMP:9563"/>
        <dbReference type="ChEBI" id="CHEBI:15378"/>
        <dbReference type="ChEBI" id="CHEBI:18151"/>
        <dbReference type="ChEBI" id="CHEBI:55437"/>
        <dbReference type="ChEBI" id="CHEBI:57856"/>
        <dbReference type="ChEBI" id="CHEBI:59789"/>
        <dbReference type="EC" id="2.1.1.163"/>
    </reaction>
</comment>
<comment type="catalytic activity">
    <reaction evidence="1">
        <text>a 2-methoxy-6-(all-trans-polyprenyl)benzene-1,4-diol + S-adenosyl-L-methionine = a 5-methoxy-2-methyl-3-(all-trans-polyprenyl)benzene-1,4-diol + S-adenosyl-L-homocysteine + H(+)</text>
        <dbReference type="Rhea" id="RHEA:28286"/>
        <dbReference type="Rhea" id="RHEA-COMP:10858"/>
        <dbReference type="Rhea" id="RHEA-COMP:10859"/>
        <dbReference type="ChEBI" id="CHEBI:15378"/>
        <dbReference type="ChEBI" id="CHEBI:57856"/>
        <dbReference type="ChEBI" id="CHEBI:59789"/>
        <dbReference type="ChEBI" id="CHEBI:84166"/>
        <dbReference type="ChEBI" id="CHEBI:84167"/>
        <dbReference type="EC" id="2.1.1.201"/>
    </reaction>
</comment>
<comment type="pathway">
    <text evidence="1">Quinol/quinone metabolism; menaquinone biosynthesis; menaquinol from 1,4-dihydroxy-2-naphthoate: step 2/2.</text>
</comment>
<comment type="pathway">
    <text evidence="1">Cofactor biosynthesis; ubiquinone biosynthesis.</text>
</comment>
<comment type="similarity">
    <text evidence="1">Belongs to the class I-like SAM-binding methyltransferase superfamily. MenG/UbiE family.</text>
</comment>
<comment type="sequence caution" evidence="2">
    <conflict type="erroneous initiation">
        <sequence resource="EMBL-CDS" id="CAC41801"/>
    </conflict>
</comment>
<dbReference type="EC" id="2.1.1.163" evidence="1"/>
<dbReference type="EC" id="2.1.1.201" evidence="1"/>
<dbReference type="EMBL" id="AL591688">
    <property type="protein sequence ID" value="CAC41801.1"/>
    <property type="status" value="ALT_INIT"/>
    <property type="molecule type" value="Genomic_DNA"/>
</dbReference>
<dbReference type="RefSeq" id="NP_384470.1">
    <property type="nucleotide sequence ID" value="NC_003047.1"/>
</dbReference>
<dbReference type="RefSeq" id="WP_003527766.1">
    <property type="nucleotide sequence ID" value="NC_003047.1"/>
</dbReference>
<dbReference type="SMR" id="Q92SK7"/>
<dbReference type="EnsemblBacteria" id="CAC41801">
    <property type="protein sequence ID" value="CAC41801"/>
    <property type="gene ID" value="SMc01155"/>
</dbReference>
<dbReference type="GeneID" id="89574693"/>
<dbReference type="KEGG" id="sme:SMc01155"/>
<dbReference type="PATRIC" id="fig|266834.11.peg.1736"/>
<dbReference type="eggNOG" id="COG2226">
    <property type="taxonomic scope" value="Bacteria"/>
</dbReference>
<dbReference type="HOGENOM" id="CLU_037990_0_1_5"/>
<dbReference type="OrthoDB" id="9808140at2"/>
<dbReference type="UniPathway" id="UPA00079">
    <property type="reaction ID" value="UER00169"/>
</dbReference>
<dbReference type="UniPathway" id="UPA00232"/>
<dbReference type="Proteomes" id="UP000001976">
    <property type="component" value="Chromosome"/>
</dbReference>
<dbReference type="GO" id="GO:0008425">
    <property type="term" value="F:2-methoxy-6-polyprenyl-1,4-benzoquinol methyltransferase activity"/>
    <property type="evidence" value="ECO:0007669"/>
    <property type="project" value="UniProtKB-UniRule"/>
</dbReference>
<dbReference type="GO" id="GO:0043770">
    <property type="term" value="F:demethylmenaquinone methyltransferase activity"/>
    <property type="evidence" value="ECO:0007669"/>
    <property type="project" value="UniProtKB-UniRule"/>
</dbReference>
<dbReference type="GO" id="GO:0009060">
    <property type="term" value="P:aerobic respiration"/>
    <property type="evidence" value="ECO:0007669"/>
    <property type="project" value="UniProtKB-UniRule"/>
</dbReference>
<dbReference type="GO" id="GO:0009234">
    <property type="term" value="P:menaquinone biosynthetic process"/>
    <property type="evidence" value="ECO:0007669"/>
    <property type="project" value="UniProtKB-UniRule"/>
</dbReference>
<dbReference type="GO" id="GO:0032259">
    <property type="term" value="P:methylation"/>
    <property type="evidence" value="ECO:0007669"/>
    <property type="project" value="UniProtKB-KW"/>
</dbReference>
<dbReference type="CDD" id="cd02440">
    <property type="entry name" value="AdoMet_MTases"/>
    <property type="match status" value="1"/>
</dbReference>
<dbReference type="Gene3D" id="3.40.50.150">
    <property type="entry name" value="Vaccinia Virus protein VP39"/>
    <property type="match status" value="1"/>
</dbReference>
<dbReference type="HAMAP" id="MF_01813">
    <property type="entry name" value="MenG_UbiE_methyltr"/>
    <property type="match status" value="1"/>
</dbReference>
<dbReference type="InterPro" id="IPR029063">
    <property type="entry name" value="SAM-dependent_MTases_sf"/>
</dbReference>
<dbReference type="InterPro" id="IPR004033">
    <property type="entry name" value="UbiE/COQ5_MeTrFase"/>
</dbReference>
<dbReference type="InterPro" id="IPR023576">
    <property type="entry name" value="UbiE/COQ5_MeTrFase_CS"/>
</dbReference>
<dbReference type="NCBIfam" id="TIGR01934">
    <property type="entry name" value="MenG_MenH_UbiE"/>
    <property type="match status" value="1"/>
</dbReference>
<dbReference type="NCBIfam" id="NF001242">
    <property type="entry name" value="PRK00216.1-3"/>
    <property type="match status" value="1"/>
</dbReference>
<dbReference type="NCBIfam" id="NF001244">
    <property type="entry name" value="PRK00216.1-5"/>
    <property type="match status" value="1"/>
</dbReference>
<dbReference type="PANTHER" id="PTHR43591:SF24">
    <property type="entry name" value="2-METHOXY-6-POLYPRENYL-1,4-BENZOQUINOL METHYLASE, MITOCHONDRIAL"/>
    <property type="match status" value="1"/>
</dbReference>
<dbReference type="PANTHER" id="PTHR43591">
    <property type="entry name" value="METHYLTRANSFERASE"/>
    <property type="match status" value="1"/>
</dbReference>
<dbReference type="Pfam" id="PF01209">
    <property type="entry name" value="Ubie_methyltran"/>
    <property type="match status" value="1"/>
</dbReference>
<dbReference type="SUPFAM" id="SSF53335">
    <property type="entry name" value="S-adenosyl-L-methionine-dependent methyltransferases"/>
    <property type="match status" value="1"/>
</dbReference>
<dbReference type="PROSITE" id="PS51608">
    <property type="entry name" value="SAM_MT_UBIE"/>
    <property type="match status" value="1"/>
</dbReference>
<dbReference type="PROSITE" id="PS01183">
    <property type="entry name" value="UBIE_1"/>
    <property type="match status" value="1"/>
</dbReference>
<dbReference type="PROSITE" id="PS01184">
    <property type="entry name" value="UBIE_2"/>
    <property type="match status" value="1"/>
</dbReference>
<keyword id="KW-0474">Menaquinone biosynthesis</keyword>
<keyword id="KW-0489">Methyltransferase</keyword>
<keyword id="KW-1185">Reference proteome</keyword>
<keyword id="KW-0949">S-adenosyl-L-methionine</keyword>
<keyword id="KW-0808">Transferase</keyword>
<keyword id="KW-0831">Ubiquinone biosynthesis</keyword>
<protein>
    <recommendedName>
        <fullName evidence="1">Ubiquinone/menaquinone biosynthesis C-methyltransferase UbiE</fullName>
        <ecNumber evidence="1">2.1.1.163</ecNumber>
        <ecNumber evidence="1">2.1.1.201</ecNumber>
    </recommendedName>
    <alternativeName>
        <fullName evidence="1">2-methoxy-6-polyprenyl-1,4-benzoquinol methylase</fullName>
    </alternativeName>
    <alternativeName>
        <fullName evidence="1">Demethylmenaquinone methyltransferase</fullName>
    </alternativeName>
</protein>
<evidence type="ECO:0000255" key="1">
    <source>
        <dbReference type="HAMAP-Rule" id="MF_01813"/>
    </source>
</evidence>
<evidence type="ECO:0000305" key="2"/>
<feature type="chain" id="PRO_0000193316" description="Ubiquinone/menaquinone biosynthesis C-methyltransferase UbiE">
    <location>
        <begin position="1"/>
        <end position="258"/>
    </location>
</feature>
<feature type="binding site" evidence="1">
    <location>
        <position position="81"/>
    </location>
    <ligand>
        <name>S-adenosyl-L-methionine</name>
        <dbReference type="ChEBI" id="CHEBI:59789"/>
    </ligand>
</feature>
<feature type="binding site" evidence="1">
    <location>
        <position position="102"/>
    </location>
    <ligand>
        <name>S-adenosyl-L-methionine</name>
        <dbReference type="ChEBI" id="CHEBI:59789"/>
    </ligand>
</feature>
<feature type="binding site" evidence="1">
    <location>
        <begin position="130"/>
        <end position="131"/>
    </location>
    <ligand>
        <name>S-adenosyl-L-methionine</name>
        <dbReference type="ChEBI" id="CHEBI:59789"/>
    </ligand>
</feature>
<accession>Q92SK7</accession>
<name>UBIE_RHIME</name>
<organism>
    <name type="scientific">Rhizobium meliloti (strain 1021)</name>
    <name type="common">Ensifer meliloti</name>
    <name type="synonym">Sinorhizobium meliloti</name>
    <dbReference type="NCBI Taxonomy" id="266834"/>
    <lineage>
        <taxon>Bacteria</taxon>
        <taxon>Pseudomonadati</taxon>
        <taxon>Pseudomonadota</taxon>
        <taxon>Alphaproteobacteria</taxon>
        <taxon>Hyphomicrobiales</taxon>
        <taxon>Rhizobiaceae</taxon>
        <taxon>Sinorhizobium/Ensifer group</taxon>
        <taxon>Sinorhizobium</taxon>
    </lineage>
</organism>
<reference key="1">
    <citation type="journal article" date="2001" name="Proc. Natl. Acad. Sci. U.S.A.">
        <title>Analysis of the chromosome sequence of the legume symbiont Sinorhizobium meliloti strain 1021.</title>
        <authorList>
            <person name="Capela D."/>
            <person name="Barloy-Hubler F."/>
            <person name="Gouzy J."/>
            <person name="Bothe G."/>
            <person name="Ampe F."/>
            <person name="Batut J."/>
            <person name="Boistard P."/>
            <person name="Becker A."/>
            <person name="Boutry M."/>
            <person name="Cadieu E."/>
            <person name="Dreano S."/>
            <person name="Gloux S."/>
            <person name="Godrie T."/>
            <person name="Goffeau A."/>
            <person name="Kahn D."/>
            <person name="Kiss E."/>
            <person name="Lelaure V."/>
            <person name="Masuy D."/>
            <person name="Pohl T."/>
            <person name="Portetelle D."/>
            <person name="Puehler A."/>
            <person name="Purnelle B."/>
            <person name="Ramsperger U."/>
            <person name="Renard C."/>
            <person name="Thebault P."/>
            <person name="Vandenbol M."/>
            <person name="Weidner S."/>
            <person name="Galibert F."/>
        </authorList>
    </citation>
    <scope>NUCLEOTIDE SEQUENCE [LARGE SCALE GENOMIC DNA]</scope>
    <source>
        <strain>1021</strain>
    </source>
</reference>
<reference key="2">
    <citation type="journal article" date="2001" name="Science">
        <title>The composite genome of the legume symbiont Sinorhizobium meliloti.</title>
        <authorList>
            <person name="Galibert F."/>
            <person name="Finan T.M."/>
            <person name="Long S.R."/>
            <person name="Puehler A."/>
            <person name="Abola P."/>
            <person name="Ampe F."/>
            <person name="Barloy-Hubler F."/>
            <person name="Barnett M.J."/>
            <person name="Becker A."/>
            <person name="Boistard P."/>
            <person name="Bothe G."/>
            <person name="Boutry M."/>
            <person name="Bowser L."/>
            <person name="Buhrmester J."/>
            <person name="Cadieu E."/>
            <person name="Capela D."/>
            <person name="Chain P."/>
            <person name="Cowie A."/>
            <person name="Davis R.W."/>
            <person name="Dreano S."/>
            <person name="Federspiel N.A."/>
            <person name="Fisher R.F."/>
            <person name="Gloux S."/>
            <person name="Godrie T."/>
            <person name="Goffeau A."/>
            <person name="Golding B."/>
            <person name="Gouzy J."/>
            <person name="Gurjal M."/>
            <person name="Hernandez-Lucas I."/>
            <person name="Hong A."/>
            <person name="Huizar L."/>
            <person name="Hyman R.W."/>
            <person name="Jones T."/>
            <person name="Kahn D."/>
            <person name="Kahn M.L."/>
            <person name="Kalman S."/>
            <person name="Keating D.H."/>
            <person name="Kiss E."/>
            <person name="Komp C."/>
            <person name="Lelaure V."/>
            <person name="Masuy D."/>
            <person name="Palm C."/>
            <person name="Peck M.C."/>
            <person name="Pohl T.M."/>
            <person name="Portetelle D."/>
            <person name="Purnelle B."/>
            <person name="Ramsperger U."/>
            <person name="Surzycki R."/>
            <person name="Thebault P."/>
            <person name="Vandenbol M."/>
            <person name="Vorhoelter F.J."/>
            <person name="Weidner S."/>
            <person name="Wells D.H."/>
            <person name="Wong K."/>
            <person name="Yeh K.-C."/>
            <person name="Batut J."/>
        </authorList>
    </citation>
    <scope>NUCLEOTIDE SEQUENCE [LARGE SCALE GENOMIC DNA]</scope>
    <source>
        <strain>1021</strain>
    </source>
</reference>
<proteinExistence type="inferred from homology"/>